<accession>Q5HL71</accession>
<name>CIDB_STAEQ</name>
<sequence length="229" mass="24798">MNEYLQAVLMILLTIVLYYVSKKIQDKYNNPLLNPALIASIAIIIVLLVCGVSYKGYMKGGTWINHVLNATVVCLAYPLYQNKKKIKKYLTIIFTSVLTGVVLNFVLVFTTLKIFGYSKDTIVTLLPRSITAAVGIEVSQELGGTDTITVLFIITTGLIGSILGSMLLRMGGFKSSIARGLTYGNASHAFGTAKALELDIESGAFSSIGMILTAVISSVLIPVLILLFY</sequence>
<keyword id="KW-1003">Cell membrane</keyword>
<keyword id="KW-0204">Cytolysis</keyword>
<keyword id="KW-0472">Membrane</keyword>
<keyword id="KW-1185">Reference proteome</keyword>
<keyword id="KW-0812">Transmembrane</keyword>
<keyword id="KW-1133">Transmembrane helix</keyword>
<evidence type="ECO:0000250" key="1"/>
<evidence type="ECO:0000255" key="2"/>
<evidence type="ECO:0000305" key="3"/>
<gene>
    <name type="primary">cidB</name>
    <name type="ordered locus">SERP2116</name>
</gene>
<feature type="chain" id="PRO_0000217052" description="Holin-like protein CidB">
    <location>
        <begin position="1"/>
        <end position="229"/>
    </location>
</feature>
<feature type="transmembrane region" description="Helical" evidence="2">
    <location>
        <begin position="4"/>
        <end position="21"/>
    </location>
</feature>
<feature type="transmembrane region" description="Helical" evidence="2">
    <location>
        <begin position="30"/>
        <end position="52"/>
    </location>
</feature>
<feature type="transmembrane region" description="Helical" evidence="2">
    <location>
        <begin position="62"/>
        <end position="80"/>
    </location>
</feature>
<feature type="transmembrane region" description="Helical" evidence="2">
    <location>
        <begin position="89"/>
        <end position="111"/>
    </location>
</feature>
<feature type="transmembrane region" description="Helical" evidence="2">
    <location>
        <begin position="147"/>
        <end position="169"/>
    </location>
</feature>
<feature type="transmembrane region" description="Helical" evidence="2">
    <location>
        <begin position="204"/>
        <end position="226"/>
    </location>
</feature>
<protein>
    <recommendedName>
        <fullName>Holin-like protein CidB</fullName>
    </recommendedName>
</protein>
<reference key="1">
    <citation type="journal article" date="2005" name="J. Bacteriol.">
        <title>Insights on evolution of virulence and resistance from the complete genome analysis of an early methicillin-resistant Staphylococcus aureus strain and a biofilm-producing methicillin-resistant Staphylococcus epidermidis strain.</title>
        <authorList>
            <person name="Gill S.R."/>
            <person name="Fouts D.E."/>
            <person name="Archer G.L."/>
            <person name="Mongodin E.F."/>
            <person name="DeBoy R.T."/>
            <person name="Ravel J."/>
            <person name="Paulsen I.T."/>
            <person name="Kolonay J.F."/>
            <person name="Brinkac L.M."/>
            <person name="Beanan M.J."/>
            <person name="Dodson R.J."/>
            <person name="Daugherty S.C."/>
            <person name="Madupu R."/>
            <person name="Angiuoli S.V."/>
            <person name="Durkin A.S."/>
            <person name="Haft D.H."/>
            <person name="Vamathevan J.J."/>
            <person name="Khouri H."/>
            <person name="Utterback T.R."/>
            <person name="Lee C."/>
            <person name="Dimitrov G."/>
            <person name="Jiang L."/>
            <person name="Qin H."/>
            <person name="Weidman J."/>
            <person name="Tran K."/>
            <person name="Kang K.H."/>
            <person name="Hance I.R."/>
            <person name="Nelson K.E."/>
            <person name="Fraser C.M."/>
        </authorList>
    </citation>
    <scope>NUCLEOTIDE SEQUENCE [LARGE SCALE GENOMIC DNA]</scope>
    <source>
        <strain>ATCC 35984 / DSM 28319 / BCRC 17069 / CCUG 31568 / BM 3577 / RP62A</strain>
    </source>
</reference>
<dbReference type="EMBL" id="CP000029">
    <property type="protein sequence ID" value="AAW52993.1"/>
    <property type="molecule type" value="Genomic_DNA"/>
</dbReference>
<dbReference type="RefSeq" id="WP_001832367.1">
    <property type="nucleotide sequence ID" value="NC_002976.3"/>
</dbReference>
<dbReference type="STRING" id="176279.SERP2116"/>
<dbReference type="KEGG" id="ser:SERP2116"/>
<dbReference type="eggNOG" id="COG1346">
    <property type="taxonomic scope" value="Bacteria"/>
</dbReference>
<dbReference type="HOGENOM" id="CLU_082099_1_0_9"/>
<dbReference type="Proteomes" id="UP000000531">
    <property type="component" value="Chromosome"/>
</dbReference>
<dbReference type="GO" id="GO:0005886">
    <property type="term" value="C:plasma membrane"/>
    <property type="evidence" value="ECO:0007669"/>
    <property type="project" value="UniProtKB-SubCell"/>
</dbReference>
<dbReference type="GO" id="GO:0031640">
    <property type="term" value="P:killing of cells of another organism"/>
    <property type="evidence" value="ECO:0007669"/>
    <property type="project" value="UniProtKB-KW"/>
</dbReference>
<dbReference type="InterPro" id="IPR007300">
    <property type="entry name" value="CidB/LrgB"/>
</dbReference>
<dbReference type="PANTHER" id="PTHR30249:SF17">
    <property type="entry name" value="HOLIN-LIKE PROTEIN CIDB"/>
    <property type="match status" value="1"/>
</dbReference>
<dbReference type="PANTHER" id="PTHR30249">
    <property type="entry name" value="PUTATIVE SEROTONIN TRANSPORTER"/>
    <property type="match status" value="1"/>
</dbReference>
<dbReference type="Pfam" id="PF04172">
    <property type="entry name" value="LrgB"/>
    <property type="match status" value="1"/>
</dbReference>
<organism>
    <name type="scientific">Staphylococcus epidermidis (strain ATCC 35984 / DSM 28319 / BCRC 17069 / CCUG 31568 / BM 3577 / RP62A)</name>
    <dbReference type="NCBI Taxonomy" id="176279"/>
    <lineage>
        <taxon>Bacteria</taxon>
        <taxon>Bacillati</taxon>
        <taxon>Bacillota</taxon>
        <taxon>Bacilli</taxon>
        <taxon>Bacillales</taxon>
        <taxon>Staphylococcaceae</taxon>
        <taxon>Staphylococcus</taxon>
    </lineage>
</organism>
<proteinExistence type="inferred from homology"/>
<comment type="function">
    <text evidence="1">Increases the activity of extracellular murein hydrolases possibly by mediating their export via hole formation. Inhibited by the antiholin-like proteins LrgAB. In an unstressed cell, the LrgAB products probably inhibit the function of the CidAB proteins. When a cell is stressed by the addition of antibiotics or by other factors in the environment, the CidAB proteins possibly oligomerize within the bacterial cell membrane, creating lesions that disrupt the proton motive force, which in turn results in loss of cell viability. These lesions are also hypothesized to regulate the subsequent cell lysis by either allowing the murein hydrolases access to the cell wall substrate and/or regulating their activity by a possible change in the cell wall pH that results from loss of membrane potential (By similarity).</text>
</comment>
<comment type="subcellular location">
    <subcellularLocation>
        <location evidence="3">Cell membrane</location>
        <topology evidence="3">Multi-pass membrane protein</topology>
    </subcellularLocation>
</comment>
<comment type="similarity">
    <text evidence="3">Belongs to the CidB/LrgB family. CidB subfamily.</text>
</comment>